<feature type="chain" id="PRO_0000210748" description="CRAL-TRIO domain-containing protein C3H8.02">
    <location>
        <begin position="1"/>
        <end position="444"/>
    </location>
</feature>
<feature type="domain" description="CRAL-TRIO" evidence="1">
    <location>
        <begin position="171"/>
        <end position="330"/>
    </location>
</feature>
<feature type="modified residue" description="Phosphoserine" evidence="2">
    <location>
        <position position="40"/>
    </location>
</feature>
<feature type="modified residue" description="Phosphothreonine" evidence="2">
    <location>
        <position position="43"/>
    </location>
</feature>
<feature type="modified residue" description="Phosphoserine" evidence="2">
    <location>
        <position position="81"/>
    </location>
</feature>
<feature type="modified residue" description="Phosphothreonine" evidence="2">
    <location>
        <position position="418"/>
    </location>
</feature>
<gene>
    <name type="ORF">SPAC3H8.02</name>
</gene>
<keyword id="KW-0597">Phosphoprotein</keyword>
<keyword id="KW-1185">Reference proteome</keyword>
<reference key="1">
    <citation type="journal article" date="2002" name="Nature">
        <title>The genome sequence of Schizosaccharomyces pombe.</title>
        <authorList>
            <person name="Wood V."/>
            <person name="Gwilliam R."/>
            <person name="Rajandream M.A."/>
            <person name="Lyne M.H."/>
            <person name="Lyne R."/>
            <person name="Stewart A."/>
            <person name="Sgouros J.G."/>
            <person name="Peat N."/>
            <person name="Hayles J."/>
            <person name="Baker S.G."/>
            <person name="Basham D."/>
            <person name="Bowman S."/>
            <person name="Brooks K."/>
            <person name="Brown D."/>
            <person name="Brown S."/>
            <person name="Chillingworth T."/>
            <person name="Churcher C.M."/>
            <person name="Collins M."/>
            <person name="Connor R."/>
            <person name="Cronin A."/>
            <person name="Davis P."/>
            <person name="Feltwell T."/>
            <person name="Fraser A."/>
            <person name="Gentles S."/>
            <person name="Goble A."/>
            <person name="Hamlin N."/>
            <person name="Harris D.E."/>
            <person name="Hidalgo J."/>
            <person name="Hodgson G."/>
            <person name="Holroyd S."/>
            <person name="Hornsby T."/>
            <person name="Howarth S."/>
            <person name="Huckle E.J."/>
            <person name="Hunt S."/>
            <person name="Jagels K."/>
            <person name="James K.D."/>
            <person name="Jones L."/>
            <person name="Jones M."/>
            <person name="Leather S."/>
            <person name="McDonald S."/>
            <person name="McLean J."/>
            <person name="Mooney P."/>
            <person name="Moule S."/>
            <person name="Mungall K.L."/>
            <person name="Murphy L.D."/>
            <person name="Niblett D."/>
            <person name="Odell C."/>
            <person name="Oliver K."/>
            <person name="O'Neil S."/>
            <person name="Pearson D."/>
            <person name="Quail M.A."/>
            <person name="Rabbinowitsch E."/>
            <person name="Rutherford K.M."/>
            <person name="Rutter S."/>
            <person name="Saunders D."/>
            <person name="Seeger K."/>
            <person name="Sharp S."/>
            <person name="Skelton J."/>
            <person name="Simmonds M.N."/>
            <person name="Squares R."/>
            <person name="Squares S."/>
            <person name="Stevens K."/>
            <person name="Taylor K."/>
            <person name="Taylor R.G."/>
            <person name="Tivey A."/>
            <person name="Walsh S.V."/>
            <person name="Warren T."/>
            <person name="Whitehead S."/>
            <person name="Woodward J.R."/>
            <person name="Volckaert G."/>
            <person name="Aert R."/>
            <person name="Robben J."/>
            <person name="Grymonprez B."/>
            <person name="Weltjens I."/>
            <person name="Vanstreels E."/>
            <person name="Rieger M."/>
            <person name="Schaefer M."/>
            <person name="Mueller-Auer S."/>
            <person name="Gabel C."/>
            <person name="Fuchs M."/>
            <person name="Duesterhoeft A."/>
            <person name="Fritzc C."/>
            <person name="Holzer E."/>
            <person name="Moestl D."/>
            <person name="Hilbert H."/>
            <person name="Borzym K."/>
            <person name="Langer I."/>
            <person name="Beck A."/>
            <person name="Lehrach H."/>
            <person name="Reinhardt R."/>
            <person name="Pohl T.M."/>
            <person name="Eger P."/>
            <person name="Zimmermann W."/>
            <person name="Wedler H."/>
            <person name="Wambutt R."/>
            <person name="Purnelle B."/>
            <person name="Goffeau A."/>
            <person name="Cadieu E."/>
            <person name="Dreano S."/>
            <person name="Gloux S."/>
            <person name="Lelaure V."/>
            <person name="Mottier S."/>
            <person name="Galibert F."/>
            <person name="Aves S.J."/>
            <person name="Xiang Z."/>
            <person name="Hunt C."/>
            <person name="Moore K."/>
            <person name="Hurst S.M."/>
            <person name="Lucas M."/>
            <person name="Rochet M."/>
            <person name="Gaillardin C."/>
            <person name="Tallada V.A."/>
            <person name="Garzon A."/>
            <person name="Thode G."/>
            <person name="Daga R.R."/>
            <person name="Cruzado L."/>
            <person name="Jimenez J."/>
            <person name="Sanchez M."/>
            <person name="del Rey F."/>
            <person name="Benito J."/>
            <person name="Dominguez A."/>
            <person name="Revuelta J.L."/>
            <person name="Moreno S."/>
            <person name="Armstrong J."/>
            <person name="Forsburg S.L."/>
            <person name="Cerutti L."/>
            <person name="Lowe T."/>
            <person name="McCombie W.R."/>
            <person name="Paulsen I."/>
            <person name="Potashkin J."/>
            <person name="Shpakovski G.V."/>
            <person name="Ussery D."/>
            <person name="Barrell B.G."/>
            <person name="Nurse P."/>
        </authorList>
    </citation>
    <scope>NUCLEOTIDE SEQUENCE [LARGE SCALE GENOMIC DNA]</scope>
    <source>
        <strain>972 / ATCC 24843</strain>
    </source>
</reference>
<reference key="2">
    <citation type="journal article" date="2008" name="J. Proteome Res.">
        <title>Phosphoproteome analysis of fission yeast.</title>
        <authorList>
            <person name="Wilson-Grady J.T."/>
            <person name="Villen J."/>
            <person name="Gygi S.P."/>
        </authorList>
    </citation>
    <scope>PHOSPHORYLATION [LARGE SCALE ANALYSIS] AT SER-40; THR-43; SER-81 AND THR-418</scope>
    <scope>IDENTIFICATION BY MASS SPECTROMETRY</scope>
</reference>
<dbReference type="EMBL" id="CU329670">
    <property type="protein sequence ID" value="CAA93159.1"/>
    <property type="molecule type" value="Genomic_DNA"/>
</dbReference>
<dbReference type="PIR" id="T38760">
    <property type="entry name" value="T38760"/>
</dbReference>
<dbReference type="SMR" id="Q10138"/>
<dbReference type="BioGRID" id="280051">
    <property type="interactions" value="41"/>
</dbReference>
<dbReference type="FunCoup" id="Q10138">
    <property type="interactions" value="122"/>
</dbReference>
<dbReference type="iPTMnet" id="Q10138"/>
<dbReference type="PaxDb" id="4896-SPAC3H8.02.1"/>
<dbReference type="EnsemblFungi" id="SPAC3H8.02.1">
    <property type="protein sequence ID" value="SPAC3H8.02.1:pep"/>
    <property type="gene ID" value="SPAC3H8.02"/>
</dbReference>
<dbReference type="KEGG" id="spo:2543637"/>
<dbReference type="PomBase" id="SPAC3H8.02"/>
<dbReference type="VEuPathDB" id="FungiDB:SPAC3H8.02"/>
<dbReference type="eggNOG" id="KOG1470">
    <property type="taxonomic scope" value="Eukaryota"/>
</dbReference>
<dbReference type="HOGENOM" id="CLU_016665_2_0_1"/>
<dbReference type="InParanoid" id="Q10138"/>
<dbReference type="OMA" id="ISTMRWR"/>
<dbReference type="PhylomeDB" id="Q10138"/>
<dbReference type="PRO" id="PR:Q10138"/>
<dbReference type="Proteomes" id="UP000002485">
    <property type="component" value="Chromosome I"/>
</dbReference>
<dbReference type="GO" id="GO:0005737">
    <property type="term" value="C:cytoplasm"/>
    <property type="evidence" value="ECO:0000266"/>
    <property type="project" value="PomBase"/>
</dbReference>
<dbReference type="GO" id="GO:0008526">
    <property type="term" value="F:phosphatidylinositol transfer activity"/>
    <property type="evidence" value="ECO:0000318"/>
    <property type="project" value="GO_Central"/>
</dbReference>
<dbReference type="GO" id="GO:0120010">
    <property type="term" value="P:intermembrane phospholipid transfer"/>
    <property type="evidence" value="ECO:0000315"/>
    <property type="project" value="PomBase"/>
</dbReference>
<dbReference type="GO" id="GO:0015914">
    <property type="term" value="P:phospholipid transport"/>
    <property type="evidence" value="ECO:0000318"/>
    <property type="project" value="GO_Central"/>
</dbReference>
<dbReference type="CDD" id="cd00170">
    <property type="entry name" value="SEC14"/>
    <property type="match status" value="1"/>
</dbReference>
<dbReference type="FunFam" id="3.40.525.10:FF:000023">
    <property type="entry name" value="Csr1p"/>
    <property type="match status" value="1"/>
</dbReference>
<dbReference type="Gene3D" id="3.40.525.10">
    <property type="entry name" value="CRAL-TRIO lipid binding domain"/>
    <property type="match status" value="1"/>
</dbReference>
<dbReference type="InterPro" id="IPR001251">
    <property type="entry name" value="CRAL-TRIO_dom"/>
</dbReference>
<dbReference type="InterPro" id="IPR036865">
    <property type="entry name" value="CRAL-TRIO_dom_sf"/>
</dbReference>
<dbReference type="InterPro" id="IPR011074">
    <property type="entry name" value="CRAL/TRIO_N_dom"/>
</dbReference>
<dbReference type="InterPro" id="IPR036273">
    <property type="entry name" value="CRAL/TRIO_N_dom_sf"/>
</dbReference>
<dbReference type="InterPro" id="IPR052432">
    <property type="entry name" value="PITP/CRAL-TRIO"/>
</dbReference>
<dbReference type="PANTHER" id="PTHR46590:SF1">
    <property type="entry name" value="PHOSPHATIDYLINOSITOL TRANSFER PROTEIN CSR1"/>
    <property type="match status" value="1"/>
</dbReference>
<dbReference type="PANTHER" id="PTHR46590">
    <property type="entry name" value="PHOSPHATIDYLINOSITOL TRANSFER PROTEIN CSR1-RELATED"/>
    <property type="match status" value="1"/>
</dbReference>
<dbReference type="Pfam" id="PF00650">
    <property type="entry name" value="CRAL_TRIO"/>
    <property type="match status" value="1"/>
</dbReference>
<dbReference type="Pfam" id="PF03765">
    <property type="entry name" value="CRAL_TRIO_N"/>
    <property type="match status" value="1"/>
</dbReference>
<dbReference type="SMART" id="SM01100">
    <property type="entry name" value="CRAL_TRIO_N"/>
    <property type="match status" value="1"/>
</dbReference>
<dbReference type="SMART" id="SM00516">
    <property type="entry name" value="SEC14"/>
    <property type="match status" value="1"/>
</dbReference>
<dbReference type="SUPFAM" id="SSF52087">
    <property type="entry name" value="CRAL/TRIO domain"/>
    <property type="match status" value="1"/>
</dbReference>
<dbReference type="SUPFAM" id="SSF46938">
    <property type="entry name" value="CRAL/TRIO N-terminal domain"/>
    <property type="match status" value="1"/>
</dbReference>
<dbReference type="PROSITE" id="PS50191">
    <property type="entry name" value="CRAL_TRIO"/>
    <property type="match status" value="1"/>
</dbReference>
<accession>Q10138</accession>
<protein>
    <recommendedName>
        <fullName>CRAL-TRIO domain-containing protein C3H8.02</fullName>
    </recommendedName>
</protein>
<name>YAS2_SCHPO</name>
<evidence type="ECO:0000255" key="1">
    <source>
        <dbReference type="PROSITE-ProRule" id="PRU00056"/>
    </source>
</evidence>
<evidence type="ECO:0000269" key="2">
    <source>
    </source>
</evidence>
<sequence>MPEGAGRPWNLTELEEEKLKTMWSYLFKLFGITLLERTESWYTVKTHLSDDSSSSSSHRLSSVSYAKSRTRLELTSSSHGSDTRSFNDKTKNVHLERVEKIASEWDPEGLRVCFWDAVNCDDPDGLLLRFLRARKWNVEAALEMFMKTVHWRSREMNVGEIVCNADHLDKDDDFVRQLRIGKCFIFGEDKHNRPVCYIRARLHKVGDVSPESVERLTVWVMETARLILKPPIETATVVFDMTDFSMSNMDYGPLKFMIKCFEAHYPECLGECIVHKAPWLFQGVWSIIKSWLDPVVVSKVKFTRNYRDLQQYINPDNILKEFGGPNPWRYTYPEPCQNEAEALKNVEARKSLRAKKDAIAKQYEEVTMDWILNNGDMAEVKQKRRKLASQLIDAYWNLDKYIRARSVYDRMGLIAPQTSHTLLLSQPTNGDVKESMVEVTSSAT</sequence>
<proteinExistence type="evidence at protein level"/>
<organism>
    <name type="scientific">Schizosaccharomyces pombe (strain 972 / ATCC 24843)</name>
    <name type="common">Fission yeast</name>
    <dbReference type="NCBI Taxonomy" id="284812"/>
    <lineage>
        <taxon>Eukaryota</taxon>
        <taxon>Fungi</taxon>
        <taxon>Dikarya</taxon>
        <taxon>Ascomycota</taxon>
        <taxon>Taphrinomycotina</taxon>
        <taxon>Schizosaccharomycetes</taxon>
        <taxon>Schizosaccharomycetales</taxon>
        <taxon>Schizosaccharomycetaceae</taxon>
        <taxon>Schizosaccharomyces</taxon>
    </lineage>
</organism>